<organism>
    <name type="scientific">Arabidopsis thaliana</name>
    <name type="common">Mouse-ear cress</name>
    <dbReference type="NCBI Taxonomy" id="3702"/>
    <lineage>
        <taxon>Eukaryota</taxon>
        <taxon>Viridiplantae</taxon>
        <taxon>Streptophyta</taxon>
        <taxon>Embryophyta</taxon>
        <taxon>Tracheophyta</taxon>
        <taxon>Spermatophyta</taxon>
        <taxon>Magnoliopsida</taxon>
        <taxon>eudicotyledons</taxon>
        <taxon>Gunneridae</taxon>
        <taxon>Pentapetalae</taxon>
        <taxon>rosids</taxon>
        <taxon>malvids</taxon>
        <taxon>Brassicales</taxon>
        <taxon>Brassicaceae</taxon>
        <taxon>Camelineae</taxon>
        <taxon>Arabidopsis</taxon>
    </lineage>
</organism>
<evidence type="ECO:0000255" key="1">
    <source>
        <dbReference type="PROSITE-ProRule" id="PRU00723"/>
    </source>
</evidence>
<evidence type="ECO:0000256" key="2">
    <source>
        <dbReference type="SAM" id="MobiDB-lite"/>
    </source>
</evidence>
<evidence type="ECO:0000269" key="3">
    <source>
    </source>
</evidence>
<evidence type="ECO:0000269" key="4">
    <source>
    </source>
</evidence>
<evidence type="ECO:0000269" key="5">
    <source>
    </source>
</evidence>
<evidence type="ECO:0000303" key="6">
    <source>
    </source>
</evidence>
<evidence type="ECO:0000303" key="7">
    <source>
    </source>
</evidence>
<evidence type="ECO:0000303" key="8">
    <source>
    </source>
</evidence>
<evidence type="ECO:0000305" key="9"/>
<evidence type="ECO:0000312" key="10">
    <source>
        <dbReference type="Araport" id="AT1G03790"/>
    </source>
</evidence>
<evidence type="ECO:0000312" key="11">
    <source>
        <dbReference type="EMBL" id="AAD10689.1"/>
    </source>
</evidence>
<sequence length="393" mass="43614">MDVVCTEHQMRKPTVEIPPRKLLLSSKSFPSDSSSPRSPRKHNWNKSNKITSEHEEDNEDNNRENKEYCYDSDSDDPYASDHFRMFEFKIRRCTRSRSHDWTDCPFAHPGEKARRRDPRRFQYSGEVCPEFRRGGDCSRGDDCEFAHGVFECWLHPIRYRTEACKDGKHCKRKVCFFAHSPRQLRVLPPENVSGVSASPSPAAKNPCCLFCSSSPTSTLLGNLSHLSRSPSLSPPMSPANKAAAFSRLRNRAASAVSAAAAAGSMNYKDVLSELVNSLDSMSLAEALQASSSSPVTTPVSAAAAAFASSCGLSNQRLHLQQQQPSSPLQFALSPSTPSYLTNSPQANFFSDDFTPRRRQMNDFTAMTAVRENTNIEDGSCGDPDLGWVNDLLT</sequence>
<gene>
    <name evidence="8" type="primary">TZF4</name>
    <name evidence="7" type="synonym">SOM</name>
    <name evidence="10" type="ordered locus">At1g03790</name>
    <name evidence="11" type="ORF">F11M21.28</name>
</gene>
<proteinExistence type="evidence at protein level"/>
<protein>
    <recommendedName>
        <fullName evidence="6">Zinc finger CCCH domain-containing protein 2</fullName>
        <shortName evidence="6">AtC3H2</shortName>
    </recommendedName>
    <alternativeName>
        <fullName evidence="7">Protein SOMNUS</fullName>
        <shortName evidence="7">SOM</shortName>
    </alternativeName>
    <alternativeName>
        <fullName evidence="8">Tandem CCCH Zinc Finger protein 4</fullName>
        <shortName evidence="8">AtTZF4</shortName>
    </alternativeName>
</protein>
<accession>Q9ZWA1</accession>
<accession>Q8GZ44</accession>
<name>C3H2_ARATH</name>
<keyword id="KW-0238">DNA-binding</keyword>
<keyword id="KW-0309">Germination</keyword>
<keyword id="KW-0479">Metal-binding</keyword>
<keyword id="KW-0539">Nucleus</keyword>
<keyword id="KW-1185">Reference proteome</keyword>
<keyword id="KW-0677">Repeat</keyword>
<keyword id="KW-0678">Repressor</keyword>
<keyword id="KW-0804">Transcription</keyword>
<keyword id="KW-0805">Transcription regulation</keyword>
<keyword id="KW-0862">Zinc</keyword>
<keyword id="KW-0863">Zinc-finger</keyword>
<dbReference type="EMBL" id="AC003027">
    <property type="protein sequence ID" value="AAD10689.1"/>
    <property type="molecule type" value="Genomic_DNA"/>
</dbReference>
<dbReference type="EMBL" id="CP002684">
    <property type="protein sequence ID" value="AEE27614.1"/>
    <property type="molecule type" value="Genomic_DNA"/>
</dbReference>
<dbReference type="EMBL" id="AK117219">
    <property type="protein sequence ID" value="BAC41895.1"/>
    <property type="molecule type" value="mRNA"/>
</dbReference>
<dbReference type="EMBL" id="BT005342">
    <property type="protein sequence ID" value="AAO63406.1"/>
    <property type="molecule type" value="mRNA"/>
</dbReference>
<dbReference type="PIR" id="D86168">
    <property type="entry name" value="D86168"/>
</dbReference>
<dbReference type="RefSeq" id="NP_171875.1">
    <property type="nucleotide sequence ID" value="NM_100258.3"/>
</dbReference>
<dbReference type="BioGRID" id="24643">
    <property type="interactions" value="7"/>
</dbReference>
<dbReference type="FunCoup" id="Q9ZWA1">
    <property type="interactions" value="688"/>
</dbReference>
<dbReference type="IntAct" id="Q9ZWA1">
    <property type="interactions" value="7"/>
</dbReference>
<dbReference type="STRING" id="3702.Q9ZWA1"/>
<dbReference type="PaxDb" id="3702-AT1G03790.1"/>
<dbReference type="ProteomicsDB" id="240447"/>
<dbReference type="EnsemblPlants" id="AT1G03790.1">
    <property type="protein sequence ID" value="AT1G03790.1"/>
    <property type="gene ID" value="AT1G03790"/>
</dbReference>
<dbReference type="GeneID" id="839408"/>
<dbReference type="Gramene" id="AT1G03790.1">
    <property type="protein sequence ID" value="AT1G03790.1"/>
    <property type="gene ID" value="AT1G03790"/>
</dbReference>
<dbReference type="KEGG" id="ath:AT1G03790"/>
<dbReference type="Araport" id="AT1G03790"/>
<dbReference type="TAIR" id="AT1G03790">
    <property type="gene designation" value="SOM"/>
</dbReference>
<dbReference type="eggNOG" id="KOG1595">
    <property type="taxonomic scope" value="Eukaryota"/>
</dbReference>
<dbReference type="HOGENOM" id="CLU_044407_3_0_1"/>
<dbReference type="InParanoid" id="Q9ZWA1"/>
<dbReference type="OMA" id="AKNPCCL"/>
<dbReference type="PhylomeDB" id="Q9ZWA1"/>
<dbReference type="PRO" id="PR:Q9ZWA1"/>
<dbReference type="Proteomes" id="UP000006548">
    <property type="component" value="Chromosome 1"/>
</dbReference>
<dbReference type="ExpressionAtlas" id="Q9ZWA1">
    <property type="expression patterns" value="baseline and differential"/>
</dbReference>
<dbReference type="GO" id="GO:0005634">
    <property type="term" value="C:nucleus"/>
    <property type="evidence" value="ECO:0000314"/>
    <property type="project" value="TAIR"/>
</dbReference>
<dbReference type="GO" id="GO:0003677">
    <property type="term" value="F:DNA binding"/>
    <property type="evidence" value="ECO:0007669"/>
    <property type="project" value="UniProtKB-KW"/>
</dbReference>
<dbReference type="GO" id="GO:0003700">
    <property type="term" value="F:DNA-binding transcription factor activity"/>
    <property type="evidence" value="ECO:0000250"/>
    <property type="project" value="TAIR"/>
</dbReference>
<dbReference type="GO" id="GO:0008270">
    <property type="term" value="F:zinc ion binding"/>
    <property type="evidence" value="ECO:0007669"/>
    <property type="project" value="UniProtKB-KW"/>
</dbReference>
<dbReference type="GO" id="GO:0010187">
    <property type="term" value="P:negative regulation of seed germination"/>
    <property type="evidence" value="ECO:0000315"/>
    <property type="project" value="TAIR"/>
</dbReference>
<dbReference type="GO" id="GO:0006355">
    <property type="term" value="P:regulation of DNA-templated transcription"/>
    <property type="evidence" value="ECO:0000304"/>
    <property type="project" value="TAIR"/>
</dbReference>
<dbReference type="FunFam" id="3.30.1370.210:FF:000007">
    <property type="entry name" value="Zinc finger CCCH domain-containing protein"/>
    <property type="match status" value="1"/>
</dbReference>
<dbReference type="Gene3D" id="3.30.1370.210">
    <property type="match status" value="1"/>
</dbReference>
<dbReference type="InterPro" id="IPR045234">
    <property type="entry name" value="Unkempt-like"/>
</dbReference>
<dbReference type="InterPro" id="IPR000571">
    <property type="entry name" value="Znf_CCCH"/>
</dbReference>
<dbReference type="InterPro" id="IPR036855">
    <property type="entry name" value="Znf_CCCH_sf"/>
</dbReference>
<dbReference type="PANTHER" id="PTHR14493">
    <property type="entry name" value="UNKEMPT FAMILY MEMBER"/>
    <property type="match status" value="1"/>
</dbReference>
<dbReference type="PANTHER" id="PTHR14493:SF90">
    <property type="entry name" value="ZINC FINGER CCCH DOMAIN-CONTAINING PROTEIN 2"/>
    <property type="match status" value="1"/>
</dbReference>
<dbReference type="Pfam" id="PF00642">
    <property type="entry name" value="zf-CCCH"/>
    <property type="match status" value="1"/>
</dbReference>
<dbReference type="Pfam" id="PF25512">
    <property type="entry name" value="zf-CCCH_AtC3H23"/>
    <property type="match status" value="1"/>
</dbReference>
<dbReference type="SMART" id="SM00356">
    <property type="entry name" value="ZnF_C3H1"/>
    <property type="match status" value="2"/>
</dbReference>
<dbReference type="SUPFAM" id="SSF90229">
    <property type="entry name" value="CCCH zinc finger"/>
    <property type="match status" value="1"/>
</dbReference>
<dbReference type="PROSITE" id="PS50103">
    <property type="entry name" value="ZF_C3H1"/>
    <property type="match status" value="1"/>
</dbReference>
<feature type="chain" id="PRO_0000371964" description="Zinc finger CCCH domain-containing protein 2">
    <location>
        <begin position="1"/>
        <end position="393"/>
    </location>
</feature>
<feature type="zinc finger region" description="C3H1-type 1" evidence="1">
    <location>
        <begin position="122"/>
        <end position="150"/>
    </location>
</feature>
<feature type="zinc finger region" description="C3H1-type 2" evidence="1">
    <location>
        <begin position="159"/>
        <end position="181"/>
    </location>
</feature>
<feature type="region of interest" description="Disordered" evidence="2">
    <location>
        <begin position="1"/>
        <end position="71"/>
    </location>
</feature>
<feature type="compositionally biased region" description="Low complexity" evidence="2">
    <location>
        <begin position="20"/>
        <end position="37"/>
    </location>
</feature>
<feature type="compositionally biased region" description="Basic and acidic residues" evidence="2">
    <location>
        <begin position="60"/>
        <end position="69"/>
    </location>
</feature>
<feature type="sequence conflict" description="In Ref. 3; BAC41895 and 4; AAO63406." evidence="9" ref="3 4">
    <original>M</original>
    <variation>I</variation>
    <location>
        <position position="360"/>
    </location>
</feature>
<reference key="1">
    <citation type="journal article" date="2000" name="Nature">
        <title>Sequence and analysis of chromosome 1 of the plant Arabidopsis thaliana.</title>
        <authorList>
            <person name="Theologis A."/>
            <person name="Ecker J.R."/>
            <person name="Palm C.J."/>
            <person name="Federspiel N.A."/>
            <person name="Kaul S."/>
            <person name="White O."/>
            <person name="Alonso J."/>
            <person name="Altafi H."/>
            <person name="Araujo R."/>
            <person name="Bowman C.L."/>
            <person name="Brooks S.Y."/>
            <person name="Buehler E."/>
            <person name="Chan A."/>
            <person name="Chao Q."/>
            <person name="Chen H."/>
            <person name="Cheuk R.F."/>
            <person name="Chin C.W."/>
            <person name="Chung M.K."/>
            <person name="Conn L."/>
            <person name="Conway A.B."/>
            <person name="Conway A.R."/>
            <person name="Creasy T.H."/>
            <person name="Dewar K."/>
            <person name="Dunn P."/>
            <person name="Etgu P."/>
            <person name="Feldblyum T.V."/>
            <person name="Feng J.-D."/>
            <person name="Fong B."/>
            <person name="Fujii C.Y."/>
            <person name="Gill J.E."/>
            <person name="Goldsmith A.D."/>
            <person name="Haas B."/>
            <person name="Hansen N.F."/>
            <person name="Hughes B."/>
            <person name="Huizar L."/>
            <person name="Hunter J.L."/>
            <person name="Jenkins J."/>
            <person name="Johnson-Hopson C."/>
            <person name="Khan S."/>
            <person name="Khaykin E."/>
            <person name="Kim C.J."/>
            <person name="Koo H.L."/>
            <person name="Kremenetskaia I."/>
            <person name="Kurtz D.B."/>
            <person name="Kwan A."/>
            <person name="Lam B."/>
            <person name="Langin-Hooper S."/>
            <person name="Lee A."/>
            <person name="Lee J.M."/>
            <person name="Lenz C.A."/>
            <person name="Li J.H."/>
            <person name="Li Y.-P."/>
            <person name="Lin X."/>
            <person name="Liu S.X."/>
            <person name="Liu Z.A."/>
            <person name="Luros J.S."/>
            <person name="Maiti R."/>
            <person name="Marziali A."/>
            <person name="Militscher J."/>
            <person name="Miranda M."/>
            <person name="Nguyen M."/>
            <person name="Nierman W.C."/>
            <person name="Osborne B.I."/>
            <person name="Pai G."/>
            <person name="Peterson J."/>
            <person name="Pham P.K."/>
            <person name="Rizzo M."/>
            <person name="Rooney T."/>
            <person name="Rowley D."/>
            <person name="Sakano H."/>
            <person name="Salzberg S.L."/>
            <person name="Schwartz J.R."/>
            <person name="Shinn P."/>
            <person name="Southwick A.M."/>
            <person name="Sun H."/>
            <person name="Tallon L.J."/>
            <person name="Tambunga G."/>
            <person name="Toriumi M.J."/>
            <person name="Town C.D."/>
            <person name="Utterback T."/>
            <person name="Van Aken S."/>
            <person name="Vaysberg M."/>
            <person name="Vysotskaia V.S."/>
            <person name="Walker M."/>
            <person name="Wu D."/>
            <person name="Yu G."/>
            <person name="Fraser C.M."/>
            <person name="Venter J.C."/>
            <person name="Davis R.W."/>
        </authorList>
    </citation>
    <scope>NUCLEOTIDE SEQUENCE [LARGE SCALE GENOMIC DNA]</scope>
    <source>
        <strain>cv. Columbia</strain>
    </source>
</reference>
<reference key="2">
    <citation type="journal article" date="2017" name="Plant J.">
        <title>Araport11: a complete reannotation of the Arabidopsis thaliana reference genome.</title>
        <authorList>
            <person name="Cheng C.Y."/>
            <person name="Krishnakumar V."/>
            <person name="Chan A.P."/>
            <person name="Thibaud-Nissen F."/>
            <person name="Schobel S."/>
            <person name="Town C.D."/>
        </authorList>
    </citation>
    <scope>GENOME REANNOTATION</scope>
    <source>
        <strain>cv. Columbia</strain>
    </source>
</reference>
<reference key="3">
    <citation type="journal article" date="2002" name="Science">
        <title>Functional annotation of a full-length Arabidopsis cDNA collection.</title>
        <authorList>
            <person name="Seki M."/>
            <person name="Narusaka M."/>
            <person name="Kamiya A."/>
            <person name="Ishida J."/>
            <person name="Satou M."/>
            <person name="Sakurai T."/>
            <person name="Nakajima M."/>
            <person name="Enju A."/>
            <person name="Akiyama K."/>
            <person name="Oono Y."/>
            <person name="Muramatsu M."/>
            <person name="Hayashizaki Y."/>
            <person name="Kawai J."/>
            <person name="Carninci P."/>
            <person name="Itoh M."/>
            <person name="Ishii Y."/>
            <person name="Arakawa T."/>
            <person name="Shibata K."/>
            <person name="Shinagawa A."/>
            <person name="Shinozaki K."/>
        </authorList>
    </citation>
    <scope>NUCLEOTIDE SEQUENCE [LARGE SCALE MRNA]</scope>
    <source>
        <strain>cv. Columbia</strain>
    </source>
</reference>
<reference key="4">
    <citation type="journal article" date="2003" name="Science">
        <title>Empirical analysis of transcriptional activity in the Arabidopsis genome.</title>
        <authorList>
            <person name="Yamada K."/>
            <person name="Lim J."/>
            <person name="Dale J.M."/>
            <person name="Chen H."/>
            <person name="Shinn P."/>
            <person name="Palm C.J."/>
            <person name="Southwick A.M."/>
            <person name="Wu H.C."/>
            <person name="Kim C.J."/>
            <person name="Nguyen M."/>
            <person name="Pham P.K."/>
            <person name="Cheuk R.F."/>
            <person name="Karlin-Newmann G."/>
            <person name="Liu S.X."/>
            <person name="Lam B."/>
            <person name="Sakano H."/>
            <person name="Wu T."/>
            <person name="Yu G."/>
            <person name="Miranda M."/>
            <person name="Quach H.L."/>
            <person name="Tripp M."/>
            <person name="Chang C.H."/>
            <person name="Lee J.M."/>
            <person name="Toriumi M.J."/>
            <person name="Chan M.M."/>
            <person name="Tang C.C."/>
            <person name="Onodera C.S."/>
            <person name="Deng J.M."/>
            <person name="Akiyama K."/>
            <person name="Ansari Y."/>
            <person name="Arakawa T."/>
            <person name="Banh J."/>
            <person name="Banno F."/>
            <person name="Bowser L."/>
            <person name="Brooks S.Y."/>
            <person name="Carninci P."/>
            <person name="Chao Q."/>
            <person name="Choy N."/>
            <person name="Enju A."/>
            <person name="Goldsmith A.D."/>
            <person name="Gurjal M."/>
            <person name="Hansen N.F."/>
            <person name="Hayashizaki Y."/>
            <person name="Johnson-Hopson C."/>
            <person name="Hsuan V.W."/>
            <person name="Iida K."/>
            <person name="Karnes M."/>
            <person name="Khan S."/>
            <person name="Koesema E."/>
            <person name="Ishida J."/>
            <person name="Jiang P.X."/>
            <person name="Jones T."/>
            <person name="Kawai J."/>
            <person name="Kamiya A."/>
            <person name="Meyers C."/>
            <person name="Nakajima M."/>
            <person name="Narusaka M."/>
            <person name="Seki M."/>
            <person name="Sakurai T."/>
            <person name="Satou M."/>
            <person name="Tamse R."/>
            <person name="Vaysberg M."/>
            <person name="Wallender E.K."/>
            <person name="Wong C."/>
            <person name="Yamamura Y."/>
            <person name="Yuan S."/>
            <person name="Shinozaki K."/>
            <person name="Davis R.W."/>
            <person name="Theologis A."/>
            <person name="Ecker J.R."/>
        </authorList>
    </citation>
    <scope>NUCLEOTIDE SEQUENCE [LARGE SCALE MRNA]</scope>
    <source>
        <strain>cv. Columbia</strain>
    </source>
</reference>
<reference key="5">
    <citation type="journal article" date="2008" name="BMC Genomics">
        <title>Genome-wide analysis of CCCH zinc finger family in Arabidopsis and rice.</title>
        <authorList>
            <person name="Wang D."/>
            <person name="Guo Y."/>
            <person name="Wu C."/>
            <person name="Yang G."/>
            <person name="Li Y."/>
            <person name="Zheng C."/>
        </authorList>
    </citation>
    <scope>NOMENCLATURE</scope>
</reference>
<reference key="6">
    <citation type="journal article" date="2008" name="Plant Cell">
        <title>SOMNUS, a CCCH-type zinc finger protein in Arabidopsis, negatively regulates light-dependent seed germination downstream of PIL5.</title>
        <authorList>
            <person name="Kim D.H."/>
            <person name="Yamaguchi S."/>
            <person name="Lim S."/>
            <person name="Oh E."/>
            <person name="Park J."/>
            <person name="Hanada A."/>
            <person name="Kamiya Y."/>
            <person name="Choi G."/>
        </authorList>
    </citation>
    <scope>FUNCTION</scope>
    <scope>SUBCELLULAR LOCATION</scope>
    <scope>TISSUE SPECIFICITY</scope>
</reference>
<reference key="7">
    <citation type="journal article" date="2012" name="Dev. Cell">
        <title>Control of seed germination by light-induced histone arginine demethylation activity.</title>
        <authorList>
            <person name="Cho J.-N."/>
            <person name="Ryu J.-Y."/>
            <person name="Jeong Y.-M."/>
            <person name="Park J."/>
            <person name="Song J.-J."/>
            <person name="Amasino R.M."/>
            <person name="Noh B."/>
            <person name="Noh Y.-S."/>
        </authorList>
    </citation>
    <scope>FUNCTION</scope>
    <scope>DISRUPTION PHENOTYPE</scope>
    <source>
        <strain>cv. Columbia</strain>
    </source>
</reference>
<reference key="8">
    <citation type="journal article" date="2016" name="PLoS ONE">
        <title>Plant tandem CCCH zinc finger proteins interact with ABA, drought, and stress response regulators in processing-bodies and stress granules.</title>
        <authorList>
            <person name="Bogamuwa S."/>
            <person name="Jang J.C."/>
        </authorList>
    </citation>
    <scope>INTERACTION WITH MARD1 AND RD21A</scope>
</reference>
<comment type="function">
    <text evidence="3 4">Probable transcription repressor that functions as a negative regulator of phytochrome-mediated promotion of seed germination. Inhibits seed germination by regulating the expression of gibberellic acid (GA) and abscisic acid (ABA) metabolic genes. Does not regulate the expression of the DELLA genes RGA and RGA1. Activated by PIL5, a phytochrome-interacting basic helix-loop-helix transcription factor (PubMed:18487351). Represses directly JMJ20 and JMJ22 expression in the absence of red light (R) and in far-red (FR) conditions (PubMed:22483719).</text>
</comment>
<comment type="subunit">
    <text evidence="5">Interacts with MARD1/FLZ9 and RD21A.</text>
</comment>
<comment type="subcellular location">
    <subcellularLocation>
        <location evidence="3">Nucleus</location>
    </subcellularLocation>
</comment>
<comment type="tissue specificity">
    <text evidence="3">Specifically expressed in seeds.</text>
</comment>
<comment type="disruption phenotype">
    <text evidence="4">Increased levels of JMJ20 and JMJ22 in far-red (FR) conditions.</text>
</comment>
<comment type="miscellaneous">
    <text>Plants lacking SOM germinate in darkness, independently of various light regimens.</text>
</comment>